<name>FTHS_CLOPS</name>
<dbReference type="EC" id="6.3.4.3" evidence="1"/>
<dbReference type="EMBL" id="CP000312">
    <property type="protein sequence ID" value="ABG86014.1"/>
    <property type="molecule type" value="Genomic_DNA"/>
</dbReference>
<dbReference type="RefSeq" id="WP_011593175.1">
    <property type="nucleotide sequence ID" value="NC_008262.1"/>
</dbReference>
<dbReference type="SMR" id="Q0SQ82"/>
<dbReference type="KEGG" id="cpr:CPR_2471"/>
<dbReference type="UniPathway" id="UPA00193"/>
<dbReference type="Proteomes" id="UP000001824">
    <property type="component" value="Chromosome"/>
</dbReference>
<dbReference type="GO" id="GO:0005524">
    <property type="term" value="F:ATP binding"/>
    <property type="evidence" value="ECO:0007669"/>
    <property type="project" value="UniProtKB-UniRule"/>
</dbReference>
<dbReference type="GO" id="GO:0004329">
    <property type="term" value="F:formate-tetrahydrofolate ligase activity"/>
    <property type="evidence" value="ECO:0007669"/>
    <property type="project" value="UniProtKB-UniRule"/>
</dbReference>
<dbReference type="GO" id="GO:0035999">
    <property type="term" value="P:tetrahydrofolate interconversion"/>
    <property type="evidence" value="ECO:0007669"/>
    <property type="project" value="UniProtKB-UniRule"/>
</dbReference>
<dbReference type="CDD" id="cd00477">
    <property type="entry name" value="FTHFS"/>
    <property type="match status" value="1"/>
</dbReference>
<dbReference type="FunFam" id="3.30.1510.10:FF:000001">
    <property type="entry name" value="Formate--tetrahydrofolate ligase"/>
    <property type="match status" value="1"/>
</dbReference>
<dbReference type="FunFam" id="3.10.410.10:FF:000001">
    <property type="entry name" value="Putative formate--tetrahydrofolate ligase"/>
    <property type="match status" value="1"/>
</dbReference>
<dbReference type="Gene3D" id="3.30.1510.10">
    <property type="entry name" value="Domain 2, N(10)-formyltetrahydrofolate synthetase"/>
    <property type="match status" value="1"/>
</dbReference>
<dbReference type="Gene3D" id="3.10.410.10">
    <property type="entry name" value="Formyltetrahydrofolate synthetase, domain 3"/>
    <property type="match status" value="1"/>
</dbReference>
<dbReference type="Gene3D" id="3.40.50.300">
    <property type="entry name" value="P-loop containing nucleotide triphosphate hydrolases"/>
    <property type="match status" value="1"/>
</dbReference>
<dbReference type="HAMAP" id="MF_01543">
    <property type="entry name" value="FTHFS"/>
    <property type="match status" value="1"/>
</dbReference>
<dbReference type="InterPro" id="IPR000559">
    <property type="entry name" value="Formate_THF_ligase"/>
</dbReference>
<dbReference type="InterPro" id="IPR020628">
    <property type="entry name" value="Formate_THF_ligase_CS"/>
</dbReference>
<dbReference type="InterPro" id="IPR027417">
    <property type="entry name" value="P-loop_NTPase"/>
</dbReference>
<dbReference type="NCBIfam" id="NF010030">
    <property type="entry name" value="PRK13505.1"/>
    <property type="match status" value="1"/>
</dbReference>
<dbReference type="Pfam" id="PF01268">
    <property type="entry name" value="FTHFS"/>
    <property type="match status" value="1"/>
</dbReference>
<dbReference type="SUPFAM" id="SSF52540">
    <property type="entry name" value="P-loop containing nucleoside triphosphate hydrolases"/>
    <property type="match status" value="1"/>
</dbReference>
<dbReference type="PROSITE" id="PS00721">
    <property type="entry name" value="FTHFS_1"/>
    <property type="match status" value="1"/>
</dbReference>
<dbReference type="PROSITE" id="PS00722">
    <property type="entry name" value="FTHFS_2"/>
    <property type="match status" value="1"/>
</dbReference>
<organism>
    <name type="scientific">Clostridium perfringens (strain SM101 / Type A)</name>
    <dbReference type="NCBI Taxonomy" id="289380"/>
    <lineage>
        <taxon>Bacteria</taxon>
        <taxon>Bacillati</taxon>
        <taxon>Bacillota</taxon>
        <taxon>Clostridia</taxon>
        <taxon>Eubacteriales</taxon>
        <taxon>Clostridiaceae</taxon>
        <taxon>Clostridium</taxon>
    </lineage>
</organism>
<accession>Q0SQ82</accession>
<keyword id="KW-0067">ATP-binding</keyword>
<keyword id="KW-0436">Ligase</keyword>
<keyword id="KW-0547">Nucleotide-binding</keyword>
<keyword id="KW-0554">One-carbon metabolism</keyword>
<protein>
    <recommendedName>
        <fullName evidence="1">Formate--tetrahydrofolate ligase</fullName>
        <ecNumber evidence="1">6.3.4.3</ecNumber>
    </recommendedName>
    <alternativeName>
        <fullName evidence="1">Formyltetrahydrofolate synthetase</fullName>
        <shortName evidence="1">FHS</shortName>
        <shortName evidence="1">FTHFS</shortName>
    </alternativeName>
</protein>
<proteinExistence type="inferred from homology"/>
<reference key="1">
    <citation type="journal article" date="2006" name="Genome Res.">
        <title>Skewed genomic variability in strains of the toxigenic bacterial pathogen, Clostridium perfringens.</title>
        <authorList>
            <person name="Myers G.S.A."/>
            <person name="Rasko D.A."/>
            <person name="Cheung J.K."/>
            <person name="Ravel J."/>
            <person name="Seshadri R."/>
            <person name="DeBoy R.T."/>
            <person name="Ren Q."/>
            <person name="Varga J."/>
            <person name="Awad M.M."/>
            <person name="Brinkac L.M."/>
            <person name="Daugherty S.C."/>
            <person name="Haft D.H."/>
            <person name="Dodson R.J."/>
            <person name="Madupu R."/>
            <person name="Nelson W.C."/>
            <person name="Rosovitz M.J."/>
            <person name="Sullivan S.A."/>
            <person name="Khouri H."/>
            <person name="Dimitrov G.I."/>
            <person name="Watkins K.L."/>
            <person name="Mulligan S."/>
            <person name="Benton J."/>
            <person name="Radune D."/>
            <person name="Fisher D.J."/>
            <person name="Atkins H.S."/>
            <person name="Hiscox T."/>
            <person name="Jost B.H."/>
            <person name="Billington S.J."/>
            <person name="Songer J.G."/>
            <person name="McClane B.A."/>
            <person name="Titball R.W."/>
            <person name="Rood J.I."/>
            <person name="Melville S.B."/>
            <person name="Paulsen I.T."/>
        </authorList>
    </citation>
    <scope>NUCLEOTIDE SEQUENCE [LARGE SCALE GENOMIC DNA]</scope>
    <source>
        <strain>SM101 / Type A</strain>
    </source>
</reference>
<gene>
    <name evidence="1" type="primary">fhs</name>
    <name type="ordered locus">CPR_2471</name>
</gene>
<sequence>MKNDIEIAQSAKMEPIINIAKKIGLEEDDIELYGKYKCKISLDVIKRLENNKDGKLVLVTAINPTPAGEGKSTVTVGLGQALNKIGKNTVIALREPSLGPVFGIKGGAAGGGYAQVVPMEDINLHFTGDMHAITSANNLLCAAIDNHIHQGNLLRIDSRRIVFKRVMDMNDRALRNIVVGMGGKINGFLREDGFMITVASEIMAILCMASDLEDLKERMGNILIAYNLDGEPVYAKELEIEGAMALLMKDAIKPNLVQTLENTPAIIHGGPFANIAHGCNSIIATKTALKMSDITITEAGFGADLGAEKFLDIKCRYGNLNPDCVVLVATIRALKHHGGVKKDELNISNVDALNKGMKNLEKQIENIKAYGVPVVVAINKFITDSDEEVKAIEDFCKNIGVEVSLTEVWEKGGEGGIDLANKVIKTMENEPSNFKMIYDSEESIKDKILKIVQTIYGGKGVNYTPQALKQIAEIEKFNLDKLPICMAKTQYSLSDNPSLLGRPENFDITIKEVRVSNGAGFIVVLTGDVMTMPGLPKVPAANRMDIKDNGEIVGLF</sequence>
<comment type="catalytic activity">
    <reaction evidence="1">
        <text>(6S)-5,6,7,8-tetrahydrofolate + formate + ATP = (6R)-10-formyltetrahydrofolate + ADP + phosphate</text>
        <dbReference type="Rhea" id="RHEA:20221"/>
        <dbReference type="ChEBI" id="CHEBI:15740"/>
        <dbReference type="ChEBI" id="CHEBI:30616"/>
        <dbReference type="ChEBI" id="CHEBI:43474"/>
        <dbReference type="ChEBI" id="CHEBI:57453"/>
        <dbReference type="ChEBI" id="CHEBI:195366"/>
        <dbReference type="ChEBI" id="CHEBI:456216"/>
        <dbReference type="EC" id="6.3.4.3"/>
    </reaction>
</comment>
<comment type="pathway">
    <text evidence="1">One-carbon metabolism; tetrahydrofolate interconversion.</text>
</comment>
<comment type="similarity">
    <text evidence="1">Belongs to the formate--tetrahydrofolate ligase family.</text>
</comment>
<feature type="chain" id="PRO_0000300521" description="Formate--tetrahydrofolate ligase">
    <location>
        <begin position="1"/>
        <end position="556"/>
    </location>
</feature>
<feature type="binding site" evidence="1">
    <location>
        <begin position="65"/>
        <end position="72"/>
    </location>
    <ligand>
        <name>ATP</name>
        <dbReference type="ChEBI" id="CHEBI:30616"/>
    </ligand>
</feature>
<evidence type="ECO:0000255" key="1">
    <source>
        <dbReference type="HAMAP-Rule" id="MF_01543"/>
    </source>
</evidence>